<proteinExistence type="inferred from homology"/>
<evidence type="ECO:0000255" key="1">
    <source>
        <dbReference type="HAMAP-Rule" id="MF_01818"/>
    </source>
</evidence>
<feature type="chain" id="PRO_0000155934" description="Ribonuclease Z">
    <location>
        <begin position="1"/>
        <end position="307"/>
    </location>
</feature>
<feature type="active site" description="Proton acceptor" evidence="1">
    <location>
        <position position="65"/>
    </location>
</feature>
<feature type="binding site" evidence="1">
    <location>
        <position position="61"/>
    </location>
    <ligand>
        <name>Zn(2+)</name>
        <dbReference type="ChEBI" id="CHEBI:29105"/>
        <label>1</label>
        <note>catalytic</note>
    </ligand>
</feature>
<feature type="binding site" evidence="1">
    <location>
        <position position="63"/>
    </location>
    <ligand>
        <name>Zn(2+)</name>
        <dbReference type="ChEBI" id="CHEBI:29105"/>
        <label>1</label>
        <note>catalytic</note>
    </ligand>
</feature>
<feature type="binding site" evidence="1">
    <location>
        <position position="65"/>
    </location>
    <ligand>
        <name>Zn(2+)</name>
        <dbReference type="ChEBI" id="CHEBI:29105"/>
        <label>2</label>
        <note>catalytic</note>
    </ligand>
</feature>
<feature type="binding site" evidence="1">
    <location>
        <position position="66"/>
    </location>
    <ligand>
        <name>Zn(2+)</name>
        <dbReference type="ChEBI" id="CHEBI:29105"/>
        <label>2</label>
        <note>catalytic</note>
    </ligand>
</feature>
<feature type="binding site" evidence="1">
    <location>
        <position position="138"/>
    </location>
    <ligand>
        <name>Zn(2+)</name>
        <dbReference type="ChEBI" id="CHEBI:29105"/>
        <label>1</label>
        <note>catalytic</note>
    </ligand>
</feature>
<feature type="binding site" evidence="1">
    <location>
        <position position="208"/>
    </location>
    <ligand>
        <name>Zn(2+)</name>
        <dbReference type="ChEBI" id="CHEBI:29105"/>
        <label>1</label>
        <note>catalytic</note>
    </ligand>
</feature>
<feature type="binding site" evidence="1">
    <location>
        <position position="208"/>
    </location>
    <ligand>
        <name>Zn(2+)</name>
        <dbReference type="ChEBI" id="CHEBI:29105"/>
        <label>2</label>
        <note>catalytic</note>
    </ligand>
</feature>
<feature type="binding site" evidence="1">
    <location>
        <position position="264"/>
    </location>
    <ligand>
        <name>Zn(2+)</name>
        <dbReference type="ChEBI" id="CHEBI:29105"/>
        <label>2</label>
        <note>catalytic</note>
    </ligand>
</feature>
<sequence>MIEVIFLGTGGIKPTPERNVPSIAIKIGGEIILFDVGEGTLRQMEIARISPMKIKRVFITHFHGDHYLGLPALIQTMSLWKRKDPLHIYGPEGSSTFLQNLLNSGYFAPSFDILVHEISGKSRLKFKEYEVWAFEVSHGVPALGYVFKEKDKRGNFNLKKIKELGLEPGPWMKELERQKIIEINGKIVRLLEVTGPKKRGAKVVYSGDTEPCDEVIEFSRRGTLLIHEATYVNEEDRKDSYHTTIEEACEIWKKSKARKLVLFHRSPRYSFKEYKEKALSICPQAIIPRDFDRIAIEGAGDVLFKIR</sequence>
<dbReference type="EC" id="3.1.26.11" evidence="1"/>
<dbReference type="EMBL" id="BA000001">
    <property type="protein sequence ID" value="BAA30251.1"/>
    <property type="molecule type" value="Genomic_DNA"/>
</dbReference>
<dbReference type="PIR" id="A71057">
    <property type="entry name" value="A71057"/>
</dbReference>
<dbReference type="RefSeq" id="WP_010885235.1">
    <property type="nucleotide sequence ID" value="NC_000961.1"/>
</dbReference>
<dbReference type="SMR" id="O58883"/>
<dbReference type="STRING" id="70601.gene:9378112"/>
<dbReference type="EnsemblBacteria" id="BAA30251">
    <property type="protein sequence ID" value="BAA30251"/>
    <property type="gene ID" value="BAA30251"/>
</dbReference>
<dbReference type="GeneID" id="1443470"/>
<dbReference type="KEGG" id="pho:PH1151"/>
<dbReference type="eggNOG" id="arCOG00501">
    <property type="taxonomic scope" value="Archaea"/>
</dbReference>
<dbReference type="OrthoDB" id="85118at2157"/>
<dbReference type="Proteomes" id="UP000000752">
    <property type="component" value="Chromosome"/>
</dbReference>
<dbReference type="GO" id="GO:0042781">
    <property type="term" value="F:3'-tRNA processing endoribonuclease activity"/>
    <property type="evidence" value="ECO:0007669"/>
    <property type="project" value="UniProtKB-UniRule"/>
</dbReference>
<dbReference type="GO" id="GO:0008270">
    <property type="term" value="F:zinc ion binding"/>
    <property type="evidence" value="ECO:0007669"/>
    <property type="project" value="UniProtKB-UniRule"/>
</dbReference>
<dbReference type="CDD" id="cd07717">
    <property type="entry name" value="RNaseZ_ZiPD-like_MBL-fold"/>
    <property type="match status" value="1"/>
</dbReference>
<dbReference type="Gene3D" id="3.60.15.10">
    <property type="entry name" value="Ribonuclease Z/Hydroxyacylglutathione hydrolase-like"/>
    <property type="match status" value="1"/>
</dbReference>
<dbReference type="HAMAP" id="MF_01818">
    <property type="entry name" value="RNase_Z_BN"/>
    <property type="match status" value="1"/>
</dbReference>
<dbReference type="InterPro" id="IPR001279">
    <property type="entry name" value="Metallo-B-lactamas"/>
</dbReference>
<dbReference type="InterPro" id="IPR036866">
    <property type="entry name" value="RibonucZ/Hydroxyglut_hydro"/>
</dbReference>
<dbReference type="InterPro" id="IPR013471">
    <property type="entry name" value="RNase_Z/BN"/>
</dbReference>
<dbReference type="NCBIfam" id="NF000801">
    <property type="entry name" value="PRK00055.1-3"/>
    <property type="match status" value="1"/>
</dbReference>
<dbReference type="NCBIfam" id="TIGR02651">
    <property type="entry name" value="RNase_Z"/>
    <property type="match status" value="1"/>
</dbReference>
<dbReference type="PANTHER" id="PTHR46018">
    <property type="entry name" value="ZINC PHOSPHODIESTERASE ELAC PROTEIN 1"/>
    <property type="match status" value="1"/>
</dbReference>
<dbReference type="PANTHER" id="PTHR46018:SF2">
    <property type="entry name" value="ZINC PHOSPHODIESTERASE ELAC PROTEIN 1"/>
    <property type="match status" value="1"/>
</dbReference>
<dbReference type="Pfam" id="PF00753">
    <property type="entry name" value="Lactamase_B"/>
    <property type="match status" value="1"/>
</dbReference>
<dbReference type="Pfam" id="PF12706">
    <property type="entry name" value="Lactamase_B_2"/>
    <property type="match status" value="1"/>
</dbReference>
<dbReference type="SMART" id="SM00849">
    <property type="entry name" value="Lactamase_B"/>
    <property type="match status" value="1"/>
</dbReference>
<dbReference type="SUPFAM" id="SSF56281">
    <property type="entry name" value="Metallo-hydrolase/oxidoreductase"/>
    <property type="match status" value="1"/>
</dbReference>
<organism>
    <name type="scientific">Pyrococcus horikoshii (strain ATCC 700860 / DSM 12428 / JCM 9974 / NBRC 100139 / OT-3)</name>
    <dbReference type="NCBI Taxonomy" id="70601"/>
    <lineage>
        <taxon>Archaea</taxon>
        <taxon>Methanobacteriati</taxon>
        <taxon>Methanobacteriota</taxon>
        <taxon>Thermococci</taxon>
        <taxon>Thermococcales</taxon>
        <taxon>Thermococcaceae</taxon>
        <taxon>Pyrococcus</taxon>
    </lineage>
</organism>
<gene>
    <name evidence="1" type="primary">rnz</name>
    <name type="ordered locus">PH1151</name>
</gene>
<comment type="function">
    <text evidence="1">Zinc phosphodiesterase, which displays some tRNA 3'-processing endonuclease activity. Probably involved in tRNA maturation, by removing a 3'-trailer from precursor tRNA.</text>
</comment>
<comment type="catalytic activity">
    <reaction evidence="1">
        <text>Endonucleolytic cleavage of RNA, removing extra 3' nucleotides from tRNA precursor, generating 3' termini of tRNAs. A 3'-hydroxy group is left at the tRNA terminus and a 5'-phosphoryl group is left at the trailer molecule.</text>
        <dbReference type="EC" id="3.1.26.11"/>
    </reaction>
</comment>
<comment type="cofactor">
    <cofactor evidence="1">
        <name>Zn(2+)</name>
        <dbReference type="ChEBI" id="CHEBI:29105"/>
    </cofactor>
    <text evidence="1">Binds 2 Zn(2+) ions.</text>
</comment>
<comment type="subunit">
    <text evidence="1">Homodimer.</text>
</comment>
<comment type="similarity">
    <text evidence="1">Belongs to the RNase Z family.</text>
</comment>
<keyword id="KW-0255">Endonuclease</keyword>
<keyword id="KW-0378">Hydrolase</keyword>
<keyword id="KW-0479">Metal-binding</keyword>
<keyword id="KW-0540">Nuclease</keyword>
<keyword id="KW-0819">tRNA processing</keyword>
<keyword id="KW-0862">Zinc</keyword>
<accession>O58883</accession>
<protein>
    <recommendedName>
        <fullName evidence="1">Ribonuclease Z</fullName>
        <shortName evidence="1">RNase Z</shortName>
        <ecNumber evidence="1">3.1.26.11</ecNumber>
    </recommendedName>
    <alternativeName>
        <fullName evidence="1">tRNA 3 endonuclease</fullName>
    </alternativeName>
    <alternativeName>
        <fullName evidence="1">tRNase Z</fullName>
    </alternativeName>
</protein>
<reference key="1">
    <citation type="journal article" date="1998" name="DNA Res.">
        <title>Complete sequence and gene organization of the genome of a hyper-thermophilic archaebacterium, Pyrococcus horikoshii OT3.</title>
        <authorList>
            <person name="Kawarabayasi Y."/>
            <person name="Sawada M."/>
            <person name="Horikawa H."/>
            <person name="Haikawa Y."/>
            <person name="Hino Y."/>
            <person name="Yamamoto S."/>
            <person name="Sekine M."/>
            <person name="Baba S."/>
            <person name="Kosugi H."/>
            <person name="Hosoyama A."/>
            <person name="Nagai Y."/>
            <person name="Sakai M."/>
            <person name="Ogura K."/>
            <person name="Otsuka R."/>
            <person name="Nakazawa H."/>
            <person name="Takamiya M."/>
            <person name="Ohfuku Y."/>
            <person name="Funahashi T."/>
            <person name="Tanaka T."/>
            <person name="Kudoh Y."/>
            <person name="Yamazaki J."/>
            <person name="Kushida N."/>
            <person name="Oguchi A."/>
            <person name="Aoki K."/>
            <person name="Yoshizawa T."/>
            <person name="Nakamura Y."/>
            <person name="Robb F.T."/>
            <person name="Horikoshi K."/>
            <person name="Masuchi Y."/>
            <person name="Shizuya H."/>
            <person name="Kikuchi H."/>
        </authorList>
    </citation>
    <scope>NUCLEOTIDE SEQUENCE [LARGE SCALE GENOMIC DNA]</scope>
    <source>
        <strain>ATCC 700860 / DSM 12428 / JCM 9974 / NBRC 100139 / OT-3</strain>
    </source>
</reference>
<name>RNZ_PYRHO</name>